<dbReference type="EC" id="3.1.3.-" evidence="1"/>
<dbReference type="EMBL" id="AM933172">
    <property type="protein sequence ID" value="CAR33492.1"/>
    <property type="molecule type" value="Genomic_DNA"/>
</dbReference>
<dbReference type="RefSeq" id="WP_000283643.1">
    <property type="nucleotide sequence ID" value="NC_011294.1"/>
</dbReference>
<dbReference type="SMR" id="B5QY29"/>
<dbReference type="KEGG" id="set:SEN1912"/>
<dbReference type="HOGENOM" id="CLU_061999_0_1_6"/>
<dbReference type="Proteomes" id="UP000000613">
    <property type="component" value="Chromosome"/>
</dbReference>
<dbReference type="GO" id="GO:0005829">
    <property type="term" value="C:cytosol"/>
    <property type="evidence" value="ECO:0007669"/>
    <property type="project" value="TreeGrafter"/>
</dbReference>
<dbReference type="GO" id="GO:0016791">
    <property type="term" value="F:phosphatase activity"/>
    <property type="evidence" value="ECO:0007669"/>
    <property type="project" value="UniProtKB-UniRule"/>
</dbReference>
<dbReference type="GO" id="GO:0008270">
    <property type="term" value="F:zinc ion binding"/>
    <property type="evidence" value="ECO:0007669"/>
    <property type="project" value="UniProtKB-UniRule"/>
</dbReference>
<dbReference type="GO" id="GO:0071978">
    <property type="term" value="P:bacterial-type flagellum-dependent swarming motility"/>
    <property type="evidence" value="ECO:0007669"/>
    <property type="project" value="TreeGrafter"/>
</dbReference>
<dbReference type="CDD" id="cd07437">
    <property type="entry name" value="PHP_HisPPase_Ycdx_like"/>
    <property type="match status" value="1"/>
</dbReference>
<dbReference type="FunFam" id="3.20.20.140:FF:000008">
    <property type="entry name" value="Probable phosphatase YcdX"/>
    <property type="match status" value="1"/>
</dbReference>
<dbReference type="Gene3D" id="3.20.20.140">
    <property type="entry name" value="Metal-dependent hydrolases"/>
    <property type="match status" value="1"/>
</dbReference>
<dbReference type="HAMAP" id="MF_01561">
    <property type="entry name" value="YcdX_phosphat"/>
    <property type="match status" value="1"/>
</dbReference>
<dbReference type="InterPro" id="IPR023710">
    <property type="entry name" value="Phosphatase_YcdX_put"/>
</dbReference>
<dbReference type="InterPro" id="IPR004013">
    <property type="entry name" value="PHP_dom"/>
</dbReference>
<dbReference type="InterPro" id="IPR050243">
    <property type="entry name" value="PHP_phosphatase"/>
</dbReference>
<dbReference type="InterPro" id="IPR003141">
    <property type="entry name" value="Pol/His_phosphatase_N"/>
</dbReference>
<dbReference type="InterPro" id="IPR016195">
    <property type="entry name" value="Pol/histidinol_Pase-like"/>
</dbReference>
<dbReference type="NCBIfam" id="NF006702">
    <property type="entry name" value="PRK09248.1"/>
    <property type="match status" value="1"/>
</dbReference>
<dbReference type="PANTHER" id="PTHR36928">
    <property type="entry name" value="PHOSPHATASE YCDX-RELATED"/>
    <property type="match status" value="1"/>
</dbReference>
<dbReference type="PANTHER" id="PTHR36928:SF1">
    <property type="entry name" value="PHOSPHATASE YCDX-RELATED"/>
    <property type="match status" value="1"/>
</dbReference>
<dbReference type="Pfam" id="PF02811">
    <property type="entry name" value="PHP"/>
    <property type="match status" value="1"/>
</dbReference>
<dbReference type="SMART" id="SM00481">
    <property type="entry name" value="POLIIIAc"/>
    <property type="match status" value="1"/>
</dbReference>
<dbReference type="SUPFAM" id="SSF89550">
    <property type="entry name" value="PHP domain-like"/>
    <property type="match status" value="1"/>
</dbReference>
<reference key="1">
    <citation type="journal article" date="2008" name="Genome Res.">
        <title>Comparative genome analysis of Salmonella enteritidis PT4 and Salmonella gallinarum 287/91 provides insights into evolutionary and host adaptation pathways.</title>
        <authorList>
            <person name="Thomson N.R."/>
            <person name="Clayton D.J."/>
            <person name="Windhorst D."/>
            <person name="Vernikos G."/>
            <person name="Davidson S."/>
            <person name="Churcher C."/>
            <person name="Quail M.A."/>
            <person name="Stevens M."/>
            <person name="Jones M.A."/>
            <person name="Watson M."/>
            <person name="Barron A."/>
            <person name="Layton A."/>
            <person name="Pickard D."/>
            <person name="Kingsley R.A."/>
            <person name="Bignell A."/>
            <person name="Clark L."/>
            <person name="Harris B."/>
            <person name="Ormond D."/>
            <person name="Abdellah Z."/>
            <person name="Brooks K."/>
            <person name="Cherevach I."/>
            <person name="Chillingworth T."/>
            <person name="Woodward J."/>
            <person name="Norberczak H."/>
            <person name="Lord A."/>
            <person name="Arrowsmith C."/>
            <person name="Jagels K."/>
            <person name="Moule S."/>
            <person name="Mungall K."/>
            <person name="Saunders M."/>
            <person name="Whitehead S."/>
            <person name="Chabalgoity J.A."/>
            <person name="Maskell D."/>
            <person name="Humphreys T."/>
            <person name="Roberts M."/>
            <person name="Barrow P.A."/>
            <person name="Dougan G."/>
            <person name="Parkhill J."/>
        </authorList>
    </citation>
    <scope>NUCLEOTIDE SEQUENCE [LARGE SCALE GENOMIC DNA]</scope>
    <source>
        <strain>P125109</strain>
    </source>
</reference>
<evidence type="ECO:0000255" key="1">
    <source>
        <dbReference type="HAMAP-Rule" id="MF_01561"/>
    </source>
</evidence>
<protein>
    <recommendedName>
        <fullName evidence="1">Probable phosphatase YcdX</fullName>
        <ecNumber evidence="1">3.1.3.-</ecNumber>
    </recommendedName>
</protein>
<comment type="cofactor">
    <cofactor evidence="1">
        <name>Zn(2+)</name>
        <dbReference type="ChEBI" id="CHEBI:29105"/>
    </cofactor>
    <text evidence="1">Binds 3 Zn(2+) ions per subunit.</text>
</comment>
<comment type="subunit">
    <text evidence="1">Homotrimer.</text>
</comment>
<comment type="similarity">
    <text evidence="1">Belongs to the PHP family.</text>
</comment>
<proteinExistence type="inferred from homology"/>
<keyword id="KW-0378">Hydrolase</keyword>
<keyword id="KW-0479">Metal-binding</keyword>
<keyword id="KW-0862">Zinc</keyword>
<sequence>MYPVDLHMHTVASTHAYSTLSDYIAEAKRKGIKLFAITDHGPDMEDAPHHWHFINMRIWPRLVDGVGILRGIEANIKNINGEIDCSGKMFDSLDLIIAGFHEPVFAPHDKETNTQAMIATIASGKVHIISHPGNPKYPVEVKAIAQAAAKHHVALEINNSSFLHSRKGSEDNCRAVAAAVRDAGGWVALGSDSHTAFTLGDFTECRKILDAVNFPEDRILNVSPQRLLAFLESRGMAPVPEFAEL</sequence>
<accession>B5QY29</accession>
<feature type="chain" id="PRO_1000147142" description="Probable phosphatase YcdX">
    <location>
        <begin position="1"/>
        <end position="245"/>
    </location>
</feature>
<feature type="binding site" evidence="1">
    <location>
        <position position="7"/>
    </location>
    <ligand>
        <name>Zn(2+)</name>
        <dbReference type="ChEBI" id="CHEBI:29105"/>
        <label>1</label>
    </ligand>
</feature>
<feature type="binding site" evidence="1">
    <location>
        <position position="9"/>
    </location>
    <ligand>
        <name>Zn(2+)</name>
        <dbReference type="ChEBI" id="CHEBI:29105"/>
        <label>1</label>
    </ligand>
</feature>
<feature type="binding site" evidence="1">
    <location>
        <position position="15"/>
    </location>
    <ligand>
        <name>Zn(2+)</name>
        <dbReference type="ChEBI" id="CHEBI:29105"/>
        <label>2</label>
    </ligand>
</feature>
<feature type="binding site" evidence="1">
    <location>
        <position position="40"/>
    </location>
    <ligand>
        <name>Zn(2+)</name>
        <dbReference type="ChEBI" id="CHEBI:29105"/>
        <label>2</label>
    </ligand>
</feature>
<feature type="binding site" evidence="1">
    <location>
        <position position="73"/>
    </location>
    <ligand>
        <name>Zn(2+)</name>
        <dbReference type="ChEBI" id="CHEBI:29105"/>
        <label>1</label>
    </ligand>
</feature>
<feature type="binding site" evidence="1">
    <location>
        <position position="73"/>
    </location>
    <ligand>
        <name>Zn(2+)</name>
        <dbReference type="ChEBI" id="CHEBI:29105"/>
        <label>3</label>
    </ligand>
</feature>
<feature type="binding site" evidence="1">
    <location>
        <position position="101"/>
    </location>
    <ligand>
        <name>Zn(2+)</name>
        <dbReference type="ChEBI" id="CHEBI:29105"/>
        <label>3</label>
    </ligand>
</feature>
<feature type="binding site" evidence="1">
    <location>
        <position position="131"/>
    </location>
    <ligand>
        <name>Zn(2+)</name>
        <dbReference type="ChEBI" id="CHEBI:29105"/>
        <label>3</label>
    </ligand>
</feature>
<feature type="binding site" evidence="1">
    <location>
        <position position="192"/>
    </location>
    <ligand>
        <name>Zn(2+)</name>
        <dbReference type="ChEBI" id="CHEBI:29105"/>
        <label>1</label>
    </ligand>
</feature>
<feature type="binding site" evidence="1">
    <location>
        <position position="194"/>
    </location>
    <ligand>
        <name>Zn(2+)</name>
        <dbReference type="ChEBI" id="CHEBI:29105"/>
        <label>2</label>
    </ligand>
</feature>
<gene>
    <name evidence="1" type="primary">ycdX</name>
    <name type="ordered locus">SEN1912</name>
</gene>
<name>YCDX_SALEP</name>
<organism>
    <name type="scientific">Salmonella enteritidis PT4 (strain P125109)</name>
    <dbReference type="NCBI Taxonomy" id="550537"/>
    <lineage>
        <taxon>Bacteria</taxon>
        <taxon>Pseudomonadati</taxon>
        <taxon>Pseudomonadota</taxon>
        <taxon>Gammaproteobacteria</taxon>
        <taxon>Enterobacterales</taxon>
        <taxon>Enterobacteriaceae</taxon>
        <taxon>Salmonella</taxon>
    </lineage>
</organism>